<protein>
    <recommendedName>
        <fullName evidence="1">Large ribosomal subunit protein bL31B</fullName>
    </recommendedName>
    <alternativeName>
        <fullName evidence="2">50S ribosomal protein L31 type B</fullName>
    </alternativeName>
</protein>
<sequence length="86" mass="9795">MKPNIHPPYRTVVFHDTSADAYFTVGSTIATERTIERDGQTYPYVTLDISSASHPYYTGKQKEFAKEGSTARFHQRFGSFLTKKTN</sequence>
<name>RL31B_YERPP</name>
<comment type="subunit">
    <text evidence="1">Part of the 50S ribosomal subunit.</text>
</comment>
<comment type="similarity">
    <text evidence="1">Belongs to the bacterial ribosomal protein bL31 family. Type B subfamily.</text>
</comment>
<evidence type="ECO:0000255" key="1">
    <source>
        <dbReference type="HAMAP-Rule" id="MF_00502"/>
    </source>
</evidence>
<evidence type="ECO:0000305" key="2"/>
<proteinExistence type="inferred from homology"/>
<feature type="chain" id="PRO_1000014725" description="Large ribosomal subunit protein bL31B">
    <location>
        <begin position="1"/>
        <end position="86"/>
    </location>
</feature>
<gene>
    <name evidence="1" type="primary">rpmE2</name>
    <name type="ordered locus">YPDSF_2769</name>
</gene>
<dbReference type="EMBL" id="CP000668">
    <property type="protein sequence ID" value="ABP41131.1"/>
    <property type="molecule type" value="Genomic_DNA"/>
</dbReference>
<dbReference type="RefSeq" id="WP_002208617.1">
    <property type="nucleotide sequence ID" value="NZ_CP009715.1"/>
</dbReference>
<dbReference type="SMR" id="A4TPB9"/>
<dbReference type="KEGG" id="ypp:YPDSF_2769"/>
<dbReference type="PATRIC" id="fig|386656.14.peg.26"/>
<dbReference type="GO" id="GO:1990904">
    <property type="term" value="C:ribonucleoprotein complex"/>
    <property type="evidence" value="ECO:0007669"/>
    <property type="project" value="UniProtKB-KW"/>
</dbReference>
<dbReference type="GO" id="GO:0005840">
    <property type="term" value="C:ribosome"/>
    <property type="evidence" value="ECO:0007669"/>
    <property type="project" value="UniProtKB-KW"/>
</dbReference>
<dbReference type="GO" id="GO:0003735">
    <property type="term" value="F:structural constituent of ribosome"/>
    <property type="evidence" value="ECO:0007669"/>
    <property type="project" value="InterPro"/>
</dbReference>
<dbReference type="GO" id="GO:0006412">
    <property type="term" value="P:translation"/>
    <property type="evidence" value="ECO:0007669"/>
    <property type="project" value="UniProtKB-UniRule"/>
</dbReference>
<dbReference type="Gene3D" id="4.10.830.30">
    <property type="entry name" value="Ribosomal protein L31"/>
    <property type="match status" value="1"/>
</dbReference>
<dbReference type="HAMAP" id="MF_00502">
    <property type="entry name" value="Ribosomal_bL31_2"/>
    <property type="match status" value="1"/>
</dbReference>
<dbReference type="InterPro" id="IPR034704">
    <property type="entry name" value="Ribosomal_bL28/bL31-like_sf"/>
</dbReference>
<dbReference type="InterPro" id="IPR002150">
    <property type="entry name" value="Ribosomal_bL31"/>
</dbReference>
<dbReference type="InterPro" id="IPR027493">
    <property type="entry name" value="Ribosomal_bL31_B"/>
</dbReference>
<dbReference type="InterPro" id="IPR042105">
    <property type="entry name" value="Ribosomal_bL31_sf"/>
</dbReference>
<dbReference type="NCBIfam" id="TIGR00105">
    <property type="entry name" value="L31"/>
    <property type="match status" value="1"/>
</dbReference>
<dbReference type="NCBIfam" id="NF002462">
    <property type="entry name" value="PRK01678.1"/>
    <property type="match status" value="1"/>
</dbReference>
<dbReference type="PANTHER" id="PTHR33280">
    <property type="entry name" value="50S RIBOSOMAL PROTEIN L31, CHLOROPLASTIC"/>
    <property type="match status" value="1"/>
</dbReference>
<dbReference type="PANTHER" id="PTHR33280:SF1">
    <property type="entry name" value="LARGE RIBOSOMAL SUBUNIT PROTEIN BL31C"/>
    <property type="match status" value="1"/>
</dbReference>
<dbReference type="Pfam" id="PF01197">
    <property type="entry name" value="Ribosomal_L31"/>
    <property type="match status" value="1"/>
</dbReference>
<dbReference type="PRINTS" id="PR01249">
    <property type="entry name" value="RIBOSOMALL31"/>
</dbReference>
<dbReference type="SUPFAM" id="SSF143800">
    <property type="entry name" value="L28p-like"/>
    <property type="match status" value="1"/>
</dbReference>
<reference key="1">
    <citation type="submission" date="2007-02" db="EMBL/GenBank/DDBJ databases">
        <title>Complete sequence of chromosome of Yersinia pestis Pestoides F.</title>
        <authorList>
            <consortium name="US DOE Joint Genome Institute"/>
            <person name="Copeland A."/>
            <person name="Lucas S."/>
            <person name="Lapidus A."/>
            <person name="Barry K."/>
            <person name="Detter J.C."/>
            <person name="Glavina del Rio T."/>
            <person name="Hammon N."/>
            <person name="Israni S."/>
            <person name="Dalin E."/>
            <person name="Tice H."/>
            <person name="Pitluck S."/>
            <person name="Di Bartolo G."/>
            <person name="Chain P."/>
            <person name="Malfatti S."/>
            <person name="Shin M."/>
            <person name="Vergez L."/>
            <person name="Schmutz J."/>
            <person name="Larimer F."/>
            <person name="Land M."/>
            <person name="Hauser L."/>
            <person name="Worsham P."/>
            <person name="Chu M."/>
            <person name="Bearden S."/>
            <person name="Garcia E."/>
            <person name="Richardson P."/>
        </authorList>
    </citation>
    <scope>NUCLEOTIDE SEQUENCE [LARGE SCALE GENOMIC DNA]</scope>
    <source>
        <strain>Pestoides F</strain>
    </source>
</reference>
<keyword id="KW-0687">Ribonucleoprotein</keyword>
<keyword id="KW-0689">Ribosomal protein</keyword>
<organism>
    <name type="scientific">Yersinia pestis (strain Pestoides F)</name>
    <dbReference type="NCBI Taxonomy" id="386656"/>
    <lineage>
        <taxon>Bacteria</taxon>
        <taxon>Pseudomonadati</taxon>
        <taxon>Pseudomonadota</taxon>
        <taxon>Gammaproteobacteria</taxon>
        <taxon>Enterobacterales</taxon>
        <taxon>Yersiniaceae</taxon>
        <taxon>Yersinia</taxon>
    </lineage>
</organism>
<accession>A4TPB9</accession>